<comment type="function">
    <text evidence="2">Catalytic subunit of the UDP-N-acetylglucosamine transferase complex that operates in the biosynthetic pathway of dolichol-linked oligosaccharides, the glycan precursors employed in protein asparagine (N)-glycosylation. The assembly of dolichol-linked oligosaccharides begins on the cytosolic side of the endoplasmic reticulum membrane and finishes in its lumen. The sequential addition of sugars to dolichol pyrophosphate produces dolichol-linked oligosaccharides containing fourteen sugars, including two GlcNAcs, nine mannoses and three glucoses. Once assembled, the oligosaccharide is transferred from the lipid to nascent proteins by oligosaccharyltransferases. On the cytoplasmic face of the endoplasmic reticulum, the dimeric ALG13/ALG14 complex catalyzes the second step of dolichol pyrophosphate biosynthesis, transferring a beta1,4-linked N-acetylglucosamine (GlcNAc) from UDP-GlcNAc to GlcNAc-pyrophosphatedolichol (Gn-PDol) to produce N,N'-diacetylchitobiosyl diphosphodolichol. N,N'-diacetylchitobiosyl diphosphodolichol is a substrate for ALG1, the following enzyme in the biosynthetic pathway.</text>
</comment>
<comment type="function">
    <molecule>Isoform 2</molecule>
    <text evidence="2">Catalytic subunit of the UDP-N-acetylglucosamine transferase complex that operates in the biosynthetic pathway of dolichol-linked oligosaccharides, the glycan precursors employed in protein asparagine (N)-glycosylation. The assembly of dolichol-linked oligosaccharides begins on the cytosolic side of the endoplasmic reticulum membrane and finishes in its lumen. The sequential addition of sugars to dolichol pyrophosphate produces dolichol-linked oligosaccharides containing fourteen sugars, including two GlcNAcs, nine mannoses and three glucoses. Once assembled, the oligosaccharide is transferred from the lipid to nascent proteins by oligosaccharyltransferases. On the cytoplasmic face of the endoplasmic reticulum, the dimeric ALG13/ALG14 complex catalyzes the second step of dolichol pyrophosphate biosynthesis, transferring a beta1,4-linked N-acetylglucosamine (GlcNAc) from UDP-GlcNAc to GlcNAc-pyrophosphatedolichol (Gn-PDol) to produce N,N'-diacetylchitobiosyl diphosphodolichol. N,N'-diacetylchitobiosyl diphosphodolichol is a substrate for ALG1, the following enzyme in the biosynthetic pathway.</text>
</comment>
<comment type="function">
    <molecule>Isoform 1</molecule>
    <text evidence="2">No glycosyltransferase or deubiquitinase activity is detected for this potential multifunctional enzyme.</text>
</comment>
<comment type="catalytic activity">
    <molecule>Isoform 2</molecule>
    <reaction evidence="2">
        <text>an N-acetyl-alpha-D-glucosaminyl-diphospho-di-trans,poly-cis-dolichol + UDP-N-acetyl-alpha-D-glucosamine = an N,N'-diacetylchitobiosyl-diphospho-di-trans,poly-cis-dolichol + UDP + H(+)</text>
        <dbReference type="Rhea" id="RHEA:23380"/>
        <dbReference type="Rhea" id="RHEA-COMP:19507"/>
        <dbReference type="Rhea" id="RHEA-COMP:19510"/>
        <dbReference type="ChEBI" id="CHEBI:15378"/>
        <dbReference type="ChEBI" id="CHEBI:57269"/>
        <dbReference type="ChEBI" id="CHEBI:57705"/>
        <dbReference type="ChEBI" id="CHEBI:58223"/>
        <dbReference type="ChEBI" id="CHEBI:58427"/>
        <dbReference type="EC" id="2.4.1.141"/>
    </reaction>
    <physiologicalReaction direction="left-to-right" evidence="2">
        <dbReference type="Rhea" id="RHEA:23381"/>
    </physiologicalReaction>
</comment>
<comment type="pathway">
    <molecule>Isoform 2</molecule>
    <text evidence="2">Protein modification; protein glycosylation.</text>
</comment>
<comment type="subunit">
    <molecule>Isoform 2</molecule>
    <text evidence="2">Forms with ALG14 the active heterodimeric UDP-N-acetylglucosamine transferase complex.</text>
</comment>
<comment type="subunit">
    <molecule>Isoform 1</molecule>
    <text evidence="2">Not able to interact with ALG14 to form an active UDP-N-acetylglucosamine transferase complex.</text>
</comment>
<comment type="subcellular location">
    <molecule>Isoform 2</molecule>
    <subcellularLocation>
        <location evidence="2">Endoplasmic reticulum membrane</location>
        <topology evidence="2">Peripheral membrane protein</topology>
    </subcellularLocation>
    <text evidence="2">Recruited to the cytosolic face of the endoplasmic reticulum membrane through its interaction with ALG14.</text>
</comment>
<comment type="alternative products">
    <event type="alternative splicing"/>
    <isoform>
        <id>Q9D8C3-1</id>
        <name>1</name>
        <sequence type="displayed"/>
    </isoform>
    <isoform>
        <id>Q9D8C3-2</id>
        <name>2</name>
        <sequence type="described" ref="VSP_039304 VSP_039305"/>
    </isoform>
</comment>
<comment type="disruption phenotype">
    <text evidence="6">Knockout mice lacking Alg13 display occasional spontaneous seizures and hyperactivation of the TORC1 signaling pathway.</text>
</comment>
<comment type="similarity">
    <text evidence="9">Belongs to the glycosyltransferase 28 family.</text>
</comment>
<comment type="sequence caution" evidence="9">
    <conflict type="erroneous gene model prediction">
        <sequence resource="EMBL-CDS" id="CAM45938"/>
    </conflict>
</comment>
<comment type="sequence caution" evidence="9">
    <conflict type="erroneous gene model prediction">
        <sequence resource="EMBL-CDS" id="CAM45939"/>
    </conflict>
</comment>
<dbReference type="EC" id="2.4.1.141" evidence="2"/>
<dbReference type="EMBL" id="AK008162">
    <property type="protein sequence ID" value="BAB25504.1"/>
    <property type="molecule type" value="mRNA"/>
</dbReference>
<dbReference type="EMBL" id="AK014790">
    <property type="protein sequence ID" value="BAB29554.1"/>
    <property type="molecule type" value="mRNA"/>
</dbReference>
<dbReference type="EMBL" id="AK086546">
    <property type="protein sequence ID" value="BAC39689.1"/>
    <property type="molecule type" value="mRNA"/>
</dbReference>
<dbReference type="EMBL" id="AK089102">
    <property type="protein sequence ID" value="BAC40750.1"/>
    <property type="molecule type" value="mRNA"/>
</dbReference>
<dbReference type="EMBL" id="AL713978">
    <property type="protein sequence ID" value="CAM45936.1"/>
    <property type="molecule type" value="Genomic_DNA"/>
</dbReference>
<dbReference type="EMBL" id="AL713978">
    <property type="protein sequence ID" value="CAM45938.1"/>
    <property type="status" value="ALT_SEQ"/>
    <property type="molecule type" value="Genomic_DNA"/>
</dbReference>
<dbReference type="EMBL" id="AL713978">
    <property type="protein sequence ID" value="CAM45939.1"/>
    <property type="status" value="ALT_SEQ"/>
    <property type="molecule type" value="Genomic_DNA"/>
</dbReference>
<dbReference type="EMBL" id="CH466610">
    <property type="protein sequence ID" value="EDL14725.1"/>
    <property type="molecule type" value="Genomic_DNA"/>
</dbReference>
<dbReference type="EMBL" id="BC053004">
    <property type="status" value="NOT_ANNOTATED_CDS"/>
    <property type="molecule type" value="mRNA"/>
</dbReference>
<dbReference type="EMBL" id="BC137692">
    <property type="protein sequence ID" value="AAI37693.1"/>
    <property type="molecule type" value="mRNA"/>
</dbReference>
<dbReference type="CCDS" id="CCDS30456.1">
    <molecule id="Q9D8C3-2"/>
</dbReference>
<dbReference type="RefSeq" id="NP_080523.2">
    <molecule id="Q9D8C3-2"/>
    <property type="nucleotide sequence ID" value="NM_026247.3"/>
</dbReference>
<dbReference type="SMR" id="Q9D8C3"/>
<dbReference type="BioGRID" id="212284">
    <property type="interactions" value="3"/>
</dbReference>
<dbReference type="FunCoup" id="Q9D8C3">
    <property type="interactions" value="1310"/>
</dbReference>
<dbReference type="STRING" id="10090.ENSMUSP00000068403"/>
<dbReference type="CAZy" id="GT1">
    <property type="family name" value="Glycosyltransferase Family 1"/>
</dbReference>
<dbReference type="GlyGen" id="Q9D8C3">
    <property type="glycosylation" value="1 site"/>
</dbReference>
<dbReference type="PhosphoSitePlus" id="Q9D8C3"/>
<dbReference type="jPOST" id="Q9D8C3"/>
<dbReference type="PeptideAtlas" id="Q9D8C3"/>
<dbReference type="ProteomicsDB" id="296093">
    <molecule id="Q9D8C3-1"/>
</dbReference>
<dbReference type="ProteomicsDB" id="296094">
    <molecule id="Q9D8C3-2"/>
</dbReference>
<dbReference type="Pumba" id="Q9D8C3"/>
<dbReference type="ABCD" id="Q9D8C3">
    <property type="antibodies" value="1 sequenced antibody"/>
</dbReference>
<dbReference type="Antibodypedia" id="490">
    <property type="antibodies" value="163 antibodies from 21 providers"/>
</dbReference>
<dbReference type="DNASU" id="67574"/>
<dbReference type="Ensembl" id="ENSMUST00000070801.11">
    <molecule id="Q9D8C3-2"/>
    <property type="protein sequence ID" value="ENSMUSP00000068403.5"/>
    <property type="gene ID" value="ENSMUSG00000041718.17"/>
</dbReference>
<dbReference type="GeneID" id="67574"/>
<dbReference type="KEGG" id="mmu:67574"/>
<dbReference type="UCSC" id="uc009ums.2">
    <molecule id="Q9D8C3-2"/>
    <property type="organism name" value="mouse"/>
</dbReference>
<dbReference type="UCSC" id="uc009umu.2">
    <molecule id="Q9D8C3-1"/>
    <property type="organism name" value="mouse"/>
</dbReference>
<dbReference type="AGR" id="MGI:1914824"/>
<dbReference type="CTD" id="79868"/>
<dbReference type="MGI" id="MGI:1914824">
    <property type="gene designation" value="Alg13"/>
</dbReference>
<dbReference type="VEuPathDB" id="HostDB:ENSMUSG00000041718"/>
<dbReference type="GeneTree" id="ENSGT00940000159922"/>
<dbReference type="HOGENOM" id="CLU_085408_2_2_1"/>
<dbReference type="InParanoid" id="Q9D8C3"/>
<dbReference type="OMA" id="YCKPSQL"/>
<dbReference type="OrthoDB" id="19900at9989"/>
<dbReference type="PhylomeDB" id="Q9D8C3"/>
<dbReference type="TreeFam" id="TF313788"/>
<dbReference type="UniPathway" id="UPA00378"/>
<dbReference type="BioGRID-ORCS" id="67574">
    <property type="hits" value="7 hits in 80 CRISPR screens"/>
</dbReference>
<dbReference type="ChiTaRS" id="Alg13">
    <property type="organism name" value="mouse"/>
</dbReference>
<dbReference type="PRO" id="PR:Q9D8C3"/>
<dbReference type="Proteomes" id="UP000000589">
    <property type="component" value="Chromosome X"/>
</dbReference>
<dbReference type="RNAct" id="Q9D8C3">
    <property type="molecule type" value="protein"/>
</dbReference>
<dbReference type="Bgee" id="ENSMUSG00000041718">
    <property type="expression patterns" value="Expressed in animal zygote and 238 other cell types or tissues"/>
</dbReference>
<dbReference type="ExpressionAtlas" id="Q9D8C3">
    <property type="expression patterns" value="baseline and differential"/>
</dbReference>
<dbReference type="GO" id="GO:0005737">
    <property type="term" value="C:cytoplasm"/>
    <property type="evidence" value="ECO:0000314"/>
    <property type="project" value="MGI"/>
</dbReference>
<dbReference type="GO" id="GO:0098554">
    <property type="term" value="C:cytoplasmic side of endoplasmic reticulum membrane"/>
    <property type="evidence" value="ECO:0000250"/>
    <property type="project" value="UniProtKB"/>
</dbReference>
<dbReference type="GO" id="GO:0043541">
    <property type="term" value="C:UDP-N-acetylglucosamine transferase complex"/>
    <property type="evidence" value="ECO:0000250"/>
    <property type="project" value="UniProtKB"/>
</dbReference>
<dbReference type="GO" id="GO:0004843">
    <property type="term" value="F:cysteine-type deubiquitinase activity"/>
    <property type="evidence" value="ECO:0007669"/>
    <property type="project" value="UniProtKB-EC"/>
</dbReference>
<dbReference type="GO" id="GO:0004577">
    <property type="term" value="F:N-acetylglucosaminyldiphosphodolichol N-acetylglucosaminyltransferase activity"/>
    <property type="evidence" value="ECO:0000250"/>
    <property type="project" value="UniProtKB"/>
</dbReference>
<dbReference type="GO" id="GO:0006488">
    <property type="term" value="P:dolichol-linked oligosaccharide biosynthetic process"/>
    <property type="evidence" value="ECO:0000250"/>
    <property type="project" value="UniProtKB"/>
</dbReference>
<dbReference type="GO" id="GO:1904262">
    <property type="term" value="P:negative regulation of TORC1 signaling"/>
    <property type="evidence" value="ECO:0000315"/>
    <property type="project" value="MGI"/>
</dbReference>
<dbReference type="GO" id="GO:0006487">
    <property type="term" value="P:protein N-linked glycosylation"/>
    <property type="evidence" value="ECO:0000250"/>
    <property type="project" value="UniProtKB"/>
</dbReference>
<dbReference type="GO" id="GO:0006508">
    <property type="term" value="P:proteolysis"/>
    <property type="evidence" value="ECO:0007669"/>
    <property type="project" value="UniProtKB-KW"/>
</dbReference>
<dbReference type="GO" id="GO:0048167">
    <property type="term" value="P:regulation of synaptic plasticity"/>
    <property type="evidence" value="ECO:0000315"/>
    <property type="project" value="MGI"/>
</dbReference>
<dbReference type="CDD" id="cd22795">
    <property type="entry name" value="OTU_ALG13"/>
    <property type="match status" value="1"/>
</dbReference>
<dbReference type="FunFam" id="3.90.70.80:FF:000015">
    <property type="entry name" value="Putative bifunctional UDP-N-acetylglucosamine transferase and deubiquitinase ALG13"/>
    <property type="match status" value="1"/>
</dbReference>
<dbReference type="Gene3D" id="3.90.70.80">
    <property type="match status" value="1"/>
</dbReference>
<dbReference type="Gene3D" id="3.40.50.2000">
    <property type="entry name" value="Glycogen Phosphorylase B"/>
    <property type="match status" value="1"/>
</dbReference>
<dbReference type="InterPro" id="IPR039042">
    <property type="entry name" value="Alg13-like"/>
</dbReference>
<dbReference type="InterPro" id="IPR007235">
    <property type="entry name" value="Glyco_trans_28_C"/>
</dbReference>
<dbReference type="InterPro" id="IPR047387">
    <property type="entry name" value="OTU_ALG13"/>
</dbReference>
<dbReference type="InterPro" id="IPR003323">
    <property type="entry name" value="OTU_dom"/>
</dbReference>
<dbReference type="InterPro" id="IPR038765">
    <property type="entry name" value="Papain-like_cys_pep_sf"/>
</dbReference>
<dbReference type="InterPro" id="IPR002999">
    <property type="entry name" value="Tudor"/>
</dbReference>
<dbReference type="PANTHER" id="PTHR12867:SF7">
    <property type="entry name" value="BIFUNCTIONAL UDP-N-ACETYLGLUCOSAMINE TRANSFERASE AND DEUBIQUITINASE ALG13-RELATED"/>
    <property type="match status" value="1"/>
</dbReference>
<dbReference type="PANTHER" id="PTHR12867">
    <property type="entry name" value="GLYCOSYL TRANSFERASE-RELATED"/>
    <property type="match status" value="1"/>
</dbReference>
<dbReference type="Pfam" id="PF04101">
    <property type="entry name" value="Glyco_tran_28_C"/>
    <property type="match status" value="1"/>
</dbReference>
<dbReference type="Pfam" id="PF02338">
    <property type="entry name" value="OTU"/>
    <property type="match status" value="1"/>
</dbReference>
<dbReference type="SUPFAM" id="SSF54001">
    <property type="entry name" value="Cysteine proteinases"/>
    <property type="match status" value="1"/>
</dbReference>
<dbReference type="SUPFAM" id="SSF63748">
    <property type="entry name" value="Tudor/PWWP/MBT"/>
    <property type="match status" value="1"/>
</dbReference>
<dbReference type="SUPFAM" id="SSF53756">
    <property type="entry name" value="UDP-Glycosyltransferase/glycogen phosphorylase"/>
    <property type="match status" value="1"/>
</dbReference>
<dbReference type="PROSITE" id="PS50802">
    <property type="entry name" value="OTU"/>
    <property type="match status" value="1"/>
</dbReference>
<dbReference type="PROSITE" id="PS50304">
    <property type="entry name" value="TUDOR"/>
    <property type="match status" value="1"/>
</dbReference>
<proteinExistence type="evidence at protein level"/>
<reference key="1">
    <citation type="journal article" date="2005" name="Science">
        <title>The transcriptional landscape of the mammalian genome.</title>
        <authorList>
            <person name="Carninci P."/>
            <person name="Kasukawa T."/>
            <person name="Katayama S."/>
            <person name="Gough J."/>
            <person name="Frith M.C."/>
            <person name="Maeda N."/>
            <person name="Oyama R."/>
            <person name="Ravasi T."/>
            <person name="Lenhard B."/>
            <person name="Wells C."/>
            <person name="Kodzius R."/>
            <person name="Shimokawa K."/>
            <person name="Bajic V.B."/>
            <person name="Brenner S.E."/>
            <person name="Batalov S."/>
            <person name="Forrest A.R."/>
            <person name="Zavolan M."/>
            <person name="Davis M.J."/>
            <person name="Wilming L.G."/>
            <person name="Aidinis V."/>
            <person name="Allen J.E."/>
            <person name="Ambesi-Impiombato A."/>
            <person name="Apweiler R."/>
            <person name="Aturaliya R.N."/>
            <person name="Bailey T.L."/>
            <person name="Bansal M."/>
            <person name="Baxter L."/>
            <person name="Beisel K.W."/>
            <person name="Bersano T."/>
            <person name="Bono H."/>
            <person name="Chalk A.M."/>
            <person name="Chiu K.P."/>
            <person name="Choudhary V."/>
            <person name="Christoffels A."/>
            <person name="Clutterbuck D.R."/>
            <person name="Crowe M.L."/>
            <person name="Dalla E."/>
            <person name="Dalrymple B.P."/>
            <person name="de Bono B."/>
            <person name="Della Gatta G."/>
            <person name="di Bernardo D."/>
            <person name="Down T."/>
            <person name="Engstrom P."/>
            <person name="Fagiolini M."/>
            <person name="Faulkner G."/>
            <person name="Fletcher C.F."/>
            <person name="Fukushima T."/>
            <person name="Furuno M."/>
            <person name="Futaki S."/>
            <person name="Gariboldi M."/>
            <person name="Georgii-Hemming P."/>
            <person name="Gingeras T.R."/>
            <person name="Gojobori T."/>
            <person name="Green R.E."/>
            <person name="Gustincich S."/>
            <person name="Harbers M."/>
            <person name="Hayashi Y."/>
            <person name="Hensch T.K."/>
            <person name="Hirokawa N."/>
            <person name="Hill D."/>
            <person name="Huminiecki L."/>
            <person name="Iacono M."/>
            <person name="Ikeo K."/>
            <person name="Iwama A."/>
            <person name="Ishikawa T."/>
            <person name="Jakt M."/>
            <person name="Kanapin A."/>
            <person name="Katoh M."/>
            <person name="Kawasawa Y."/>
            <person name="Kelso J."/>
            <person name="Kitamura H."/>
            <person name="Kitano H."/>
            <person name="Kollias G."/>
            <person name="Krishnan S.P."/>
            <person name="Kruger A."/>
            <person name="Kummerfeld S.K."/>
            <person name="Kurochkin I.V."/>
            <person name="Lareau L.F."/>
            <person name="Lazarevic D."/>
            <person name="Lipovich L."/>
            <person name="Liu J."/>
            <person name="Liuni S."/>
            <person name="McWilliam S."/>
            <person name="Madan Babu M."/>
            <person name="Madera M."/>
            <person name="Marchionni L."/>
            <person name="Matsuda H."/>
            <person name="Matsuzawa S."/>
            <person name="Miki H."/>
            <person name="Mignone F."/>
            <person name="Miyake S."/>
            <person name="Morris K."/>
            <person name="Mottagui-Tabar S."/>
            <person name="Mulder N."/>
            <person name="Nakano N."/>
            <person name="Nakauchi H."/>
            <person name="Ng P."/>
            <person name="Nilsson R."/>
            <person name="Nishiguchi S."/>
            <person name="Nishikawa S."/>
            <person name="Nori F."/>
            <person name="Ohara O."/>
            <person name="Okazaki Y."/>
            <person name="Orlando V."/>
            <person name="Pang K.C."/>
            <person name="Pavan W.J."/>
            <person name="Pavesi G."/>
            <person name="Pesole G."/>
            <person name="Petrovsky N."/>
            <person name="Piazza S."/>
            <person name="Reed J."/>
            <person name="Reid J.F."/>
            <person name="Ring B.Z."/>
            <person name="Ringwald M."/>
            <person name="Rost B."/>
            <person name="Ruan Y."/>
            <person name="Salzberg S.L."/>
            <person name="Sandelin A."/>
            <person name="Schneider C."/>
            <person name="Schoenbach C."/>
            <person name="Sekiguchi K."/>
            <person name="Semple C.A."/>
            <person name="Seno S."/>
            <person name="Sessa L."/>
            <person name="Sheng Y."/>
            <person name="Shibata Y."/>
            <person name="Shimada H."/>
            <person name="Shimada K."/>
            <person name="Silva D."/>
            <person name="Sinclair B."/>
            <person name="Sperling S."/>
            <person name="Stupka E."/>
            <person name="Sugiura K."/>
            <person name="Sultana R."/>
            <person name="Takenaka Y."/>
            <person name="Taki K."/>
            <person name="Tammoja K."/>
            <person name="Tan S.L."/>
            <person name="Tang S."/>
            <person name="Taylor M.S."/>
            <person name="Tegner J."/>
            <person name="Teichmann S.A."/>
            <person name="Ueda H.R."/>
            <person name="van Nimwegen E."/>
            <person name="Verardo R."/>
            <person name="Wei C.L."/>
            <person name="Yagi K."/>
            <person name="Yamanishi H."/>
            <person name="Zabarovsky E."/>
            <person name="Zhu S."/>
            <person name="Zimmer A."/>
            <person name="Hide W."/>
            <person name="Bult C."/>
            <person name="Grimmond S.M."/>
            <person name="Teasdale R.D."/>
            <person name="Liu E.T."/>
            <person name="Brusic V."/>
            <person name="Quackenbush J."/>
            <person name="Wahlestedt C."/>
            <person name="Mattick J.S."/>
            <person name="Hume D.A."/>
            <person name="Kai C."/>
            <person name="Sasaki D."/>
            <person name="Tomaru Y."/>
            <person name="Fukuda S."/>
            <person name="Kanamori-Katayama M."/>
            <person name="Suzuki M."/>
            <person name="Aoki J."/>
            <person name="Arakawa T."/>
            <person name="Iida J."/>
            <person name="Imamura K."/>
            <person name="Itoh M."/>
            <person name="Kato T."/>
            <person name="Kawaji H."/>
            <person name="Kawagashira N."/>
            <person name="Kawashima T."/>
            <person name="Kojima M."/>
            <person name="Kondo S."/>
            <person name="Konno H."/>
            <person name="Nakano K."/>
            <person name="Ninomiya N."/>
            <person name="Nishio T."/>
            <person name="Okada M."/>
            <person name="Plessy C."/>
            <person name="Shibata K."/>
            <person name="Shiraki T."/>
            <person name="Suzuki S."/>
            <person name="Tagami M."/>
            <person name="Waki K."/>
            <person name="Watahiki A."/>
            <person name="Okamura-Oho Y."/>
            <person name="Suzuki H."/>
            <person name="Kawai J."/>
            <person name="Hayashizaki Y."/>
        </authorList>
    </citation>
    <scope>NUCLEOTIDE SEQUENCE [LARGE SCALE MRNA] (ISOFORM 2)</scope>
    <source>
        <strain>C57BL/6J</strain>
        <strain>NOD</strain>
        <tissue>Head</tissue>
        <tissue>Small intestine</tissue>
        <tissue>Thymus</tissue>
    </source>
</reference>
<reference key="2">
    <citation type="journal article" date="2009" name="PLoS Biol.">
        <title>Lineage-specific biology revealed by a finished genome assembly of the mouse.</title>
        <authorList>
            <person name="Church D.M."/>
            <person name="Goodstadt L."/>
            <person name="Hillier L.W."/>
            <person name="Zody M.C."/>
            <person name="Goldstein S."/>
            <person name="She X."/>
            <person name="Bult C.J."/>
            <person name="Agarwala R."/>
            <person name="Cherry J.L."/>
            <person name="DiCuccio M."/>
            <person name="Hlavina W."/>
            <person name="Kapustin Y."/>
            <person name="Meric P."/>
            <person name="Maglott D."/>
            <person name="Birtle Z."/>
            <person name="Marques A.C."/>
            <person name="Graves T."/>
            <person name="Zhou S."/>
            <person name="Teague B."/>
            <person name="Potamousis K."/>
            <person name="Churas C."/>
            <person name="Place M."/>
            <person name="Herschleb J."/>
            <person name="Runnheim R."/>
            <person name="Forrest D."/>
            <person name="Amos-Landgraf J."/>
            <person name="Schwartz D.C."/>
            <person name="Cheng Z."/>
            <person name="Lindblad-Toh K."/>
            <person name="Eichler E.E."/>
            <person name="Ponting C.P."/>
        </authorList>
    </citation>
    <scope>NUCLEOTIDE SEQUENCE [LARGE SCALE GENOMIC DNA]</scope>
    <source>
        <strain>C57BL/6J</strain>
    </source>
</reference>
<reference key="3">
    <citation type="submission" date="2005-09" db="EMBL/GenBank/DDBJ databases">
        <authorList>
            <person name="Mural R.J."/>
            <person name="Adams M.D."/>
            <person name="Myers E.W."/>
            <person name="Smith H.O."/>
            <person name="Venter J.C."/>
        </authorList>
    </citation>
    <scope>NUCLEOTIDE SEQUENCE [LARGE SCALE GENOMIC DNA]</scope>
</reference>
<reference key="4">
    <citation type="journal article" date="2004" name="Genome Res.">
        <title>The status, quality, and expansion of the NIH full-length cDNA project: the Mammalian Gene Collection (MGC).</title>
        <authorList>
            <consortium name="The MGC Project Team"/>
        </authorList>
    </citation>
    <scope>NUCLEOTIDE SEQUENCE [LARGE SCALE MRNA] (ISOFORMS 1 AND 2)</scope>
    <source>
        <strain>C57BL/6J</strain>
        <tissue>Fetal brain</tissue>
    </source>
</reference>
<reference key="5">
    <citation type="journal article" date="2010" name="Cell">
        <title>A tissue-specific atlas of mouse protein phosphorylation and expression.</title>
        <authorList>
            <person name="Huttlin E.L."/>
            <person name="Jedrychowski M.P."/>
            <person name="Elias J.E."/>
            <person name="Goswami T."/>
            <person name="Rad R."/>
            <person name="Beausoleil S.A."/>
            <person name="Villen J."/>
            <person name="Haas W."/>
            <person name="Sowa M.E."/>
            <person name="Gygi S.P."/>
        </authorList>
    </citation>
    <scope>IDENTIFICATION BY MASS SPECTROMETRY [LARGE SCALE ANALYSIS]</scope>
    <source>
        <tissue>Kidney</tissue>
        <tissue>Liver</tissue>
        <tissue>Spleen</tissue>
        <tissue>Testis</tissue>
    </source>
</reference>
<reference key="6">
    <citation type="journal article" date="2019" name="Neuroscience">
        <title>ALG13 Deficiency Associated with Increased Seizure Susceptibility and Severity.</title>
        <authorList>
            <person name="Gao P."/>
            <person name="Wang F."/>
            <person name="Huo J."/>
            <person name="Wan D."/>
            <person name="Zhang J."/>
            <person name="Niu J."/>
            <person name="Wu J."/>
            <person name="Yu B."/>
            <person name="Sun T."/>
        </authorList>
    </citation>
    <scope>DISRUPTION PHENOTYPE</scope>
</reference>
<gene>
    <name evidence="10" type="primary">Alg13</name>
</gene>
<sequence>MKRAFVTVGTTSFDELVARVVANDCVQILESLGYNHLVLQVGRGTVVPKPFRTESFTLDVYRYKDSLKEDLQQADLVISHAGAGSCLESLEKGKPLVVVVNEKLMNNHQFELAKQLHKEGHLFYCTCRVLSCPAPVSLLLVLLGSAKILQQLPSATLSCFGYLPTQAPVLVATAYSYLHSVFSSFPPLSTFLIIPCTMQKGWKKYCGQKSLNEASMDEYLGSLGLFRKVVAKDASCLFRAISEQLFHSQIHHLQIRRACVSYMKENQQAFESYVEGSFEKYLERLGDPKESAGQLELKALSLIYNRDFIIYRYPGKPPTQVTDNGFEDKIILCYSNNGHYDSVYSKEFQSTAGICQAILYELLYKDVFVVDEETLKTAVDLFRSGSRRNKHHALTASVEGSSDQKSSTEDRTEEAAACSSAASTPEGNKQGTERQKVPESPSKMLFPYKVLKALDPEIYRNVEFDAWLDSRKELQKSECVEYGGRYYFLGDKCQVCMESGGKYYNAHIQEIDNDKSSVVVFIEEFAERHSIPLAHVRPVNQVALLPSWNAIPIRNGRGYPTITGGYFPEIVMTDMNMKQRKKMFKKFRGKEIYMTMAYSRGDPLVPSRIQHSMHYGHDPLLYYSQTAGHILSSQHFYPQHSSQRQGRGYGMPRDSSHLISKQNLPNPKVGFCSGSGRKCCQSYDNVSYRSRSFRRSHRQMHCMNKGCQYGFAPENGVEETVTFYALEEGNETAYSTLPNNGGPTTMVPATSGYCVARQGYNSCKPPLNSGDSNDHCDNGGYHGDYLYSSEQGYETSSVYTTTVSTANLSLQDSGPSSVPQDTVTSYNYPQKVLENSAAIAVSWASHVPVPVIPNCAGDNEALRTSDISSQNAIQPGFVPPPAQGSPAYLEPSAAGAAGAAAAAAAAAAPVATPVAAPLPLPPPLPPPPPATLEAGDASGFPLPPPPPPPPPPPPPYSYDPSGSDLPQDTKVLQYYFNLGLQCYHHNYWHPMVYMPHVQQQLQPQPQPQPQPQPQPQPQPQPQPQQPQQQQPPPQQQQQQQEQVHGESYPDCTEQPLVDQSAPQVYSDVVREDGTQADVSTNDTFPIADAVPLPHGAVYYPVMTDPYGSPLLGFDSYVPVASDYSSIAMWHPVNAACGASAQIHGAMNPGPIGYMLLPNSPHYTPQN</sequence>
<protein>
    <recommendedName>
        <fullName evidence="2">UDP-N-acetylglucosamine transferase subunit ALG13</fullName>
        <ecNumber evidence="2">2.4.1.141</ecNumber>
    </recommendedName>
    <alternativeName>
        <fullName evidence="10">Asparagine-linked glycosylation 13 homolog</fullName>
    </alternativeName>
</protein>
<organism>
    <name type="scientific">Mus musculus</name>
    <name type="common">Mouse</name>
    <dbReference type="NCBI Taxonomy" id="10090"/>
    <lineage>
        <taxon>Eukaryota</taxon>
        <taxon>Metazoa</taxon>
        <taxon>Chordata</taxon>
        <taxon>Craniata</taxon>
        <taxon>Vertebrata</taxon>
        <taxon>Euteleostomi</taxon>
        <taxon>Mammalia</taxon>
        <taxon>Eutheria</taxon>
        <taxon>Euarchontoglires</taxon>
        <taxon>Glires</taxon>
        <taxon>Rodentia</taxon>
        <taxon>Myomorpha</taxon>
        <taxon>Muroidea</taxon>
        <taxon>Muridae</taxon>
        <taxon>Murinae</taxon>
        <taxon>Mus</taxon>
        <taxon>Mus</taxon>
    </lineage>
</organism>
<name>ALG13_MOUSE</name>
<keyword id="KW-0025">Alternative splicing</keyword>
<keyword id="KW-0256">Endoplasmic reticulum</keyword>
<keyword id="KW-0328">Glycosyltransferase</keyword>
<keyword id="KW-0378">Hydrolase</keyword>
<keyword id="KW-0472">Membrane</keyword>
<keyword id="KW-0511">Multifunctional enzyme</keyword>
<keyword id="KW-0645">Protease</keyword>
<keyword id="KW-1185">Reference proteome</keyword>
<keyword id="KW-0788">Thiol protease</keyword>
<keyword id="KW-0808">Transferase</keyword>
<keyword id="KW-0833">Ubl conjugation pathway</keyword>
<feature type="chain" id="PRO_0000254574" description="UDP-N-acetylglucosamine transferase subunit ALG13">
    <location>
        <begin position="1"/>
        <end position="1166"/>
    </location>
</feature>
<feature type="domain" description="OTU" evidence="3">
    <location>
        <begin position="225"/>
        <end position="346"/>
    </location>
</feature>
<feature type="domain" description="Tudor" evidence="4">
    <location>
        <begin position="486"/>
        <end position="546"/>
    </location>
</feature>
<feature type="region of interest" description="Glycosyltransferase activity" evidence="1">
    <location>
        <begin position="1"/>
        <end position="125"/>
    </location>
</feature>
<feature type="region of interest" description="Deubiquitinase activity" evidence="1">
    <location>
        <begin position="126"/>
        <end position="394"/>
    </location>
</feature>
<feature type="region of interest" description="Disordered" evidence="5">
    <location>
        <begin position="393"/>
        <end position="438"/>
    </location>
</feature>
<feature type="region of interest" description="Disordered" evidence="5">
    <location>
        <begin position="921"/>
        <end position="966"/>
    </location>
</feature>
<feature type="region of interest" description="Disordered" evidence="5">
    <location>
        <begin position="998"/>
        <end position="1056"/>
    </location>
</feature>
<feature type="compositionally biased region" description="Pro residues" evidence="5">
    <location>
        <begin position="921"/>
        <end position="930"/>
    </location>
</feature>
<feature type="compositionally biased region" description="Pro residues" evidence="5">
    <location>
        <begin position="941"/>
        <end position="957"/>
    </location>
</feature>
<feature type="compositionally biased region" description="Pro residues" evidence="5">
    <location>
        <begin position="1004"/>
        <end position="1034"/>
    </location>
</feature>
<feature type="active site" description="For deubiquitinase activity" evidence="1">
    <location>
        <position position="233"/>
    </location>
</feature>
<feature type="active site" description="Nucleophile; for deubiquitinase activity" evidence="1">
    <location>
        <position position="236"/>
    </location>
</feature>
<feature type="active site" description="For deubiquitinase activity" evidence="1">
    <location>
        <position position="339"/>
    </location>
</feature>
<feature type="splice variant" id="VSP_039304" description="In isoform 2." evidence="7 8">
    <original>RVLSCPAPVSLLLVLLGSAKILQQLPSATLSCFGYLPT</original>
    <variation>STLPGLLQSMDLSTLKCYPPGQPEKFSAFLDKVVGLQK</variation>
    <location>
        <begin position="128"/>
        <end position="165"/>
    </location>
</feature>
<feature type="splice variant" id="VSP_039305" description="In isoform 2." evidence="7 8">
    <location>
        <begin position="166"/>
        <end position="1166"/>
    </location>
</feature>
<feature type="sequence conflict" description="In Ref. 1; BAB29554." evidence="9" ref="1">
    <original>Q</original>
    <variation>H</variation>
    <location sequence="Q9D8C3-2">
        <position position="149"/>
    </location>
</feature>
<evidence type="ECO:0000250" key="1"/>
<evidence type="ECO:0000250" key="2">
    <source>
        <dbReference type="UniProtKB" id="Q9NP73"/>
    </source>
</evidence>
<evidence type="ECO:0000255" key="3">
    <source>
        <dbReference type="PROSITE-ProRule" id="PRU00139"/>
    </source>
</evidence>
<evidence type="ECO:0000255" key="4">
    <source>
        <dbReference type="PROSITE-ProRule" id="PRU00211"/>
    </source>
</evidence>
<evidence type="ECO:0000256" key="5">
    <source>
        <dbReference type="SAM" id="MobiDB-lite"/>
    </source>
</evidence>
<evidence type="ECO:0000269" key="6">
    <source>
    </source>
</evidence>
<evidence type="ECO:0000303" key="7">
    <source>
    </source>
</evidence>
<evidence type="ECO:0000303" key="8">
    <source>
    </source>
</evidence>
<evidence type="ECO:0000305" key="9"/>
<evidence type="ECO:0000312" key="10">
    <source>
        <dbReference type="MGI" id="MGI:1914824"/>
    </source>
</evidence>
<accession>Q9D8C3</accession>
<accession>A3KGC8</accession>
<accession>A3KGD0</accession>
<accession>A3KGD1</accession>
<accession>Q8BUA4</accession>
<accession>Q9D5Z6</accession>